<protein>
    <recommendedName>
        <fullName evidence="1">ATP synthase subunit alpha</fullName>
        <ecNumber evidence="1">7.1.2.2</ecNumber>
    </recommendedName>
    <alternativeName>
        <fullName evidence="1">ATP synthase F1 sector subunit alpha</fullName>
    </alternativeName>
    <alternativeName>
        <fullName evidence="1">F-ATPase subunit alpha</fullName>
    </alternativeName>
</protein>
<keyword id="KW-0066">ATP synthesis</keyword>
<keyword id="KW-0067">ATP-binding</keyword>
<keyword id="KW-0997">Cell inner membrane</keyword>
<keyword id="KW-1003">Cell membrane</keyword>
<keyword id="KW-0139">CF(1)</keyword>
<keyword id="KW-0375">Hydrogen ion transport</keyword>
<keyword id="KW-0406">Ion transport</keyword>
<keyword id="KW-0472">Membrane</keyword>
<keyword id="KW-0547">Nucleotide-binding</keyword>
<keyword id="KW-1278">Translocase</keyword>
<keyword id="KW-0813">Transport</keyword>
<gene>
    <name evidence="1" type="primary">atpA</name>
    <name type="ordered locus">swp_5158</name>
</gene>
<accession>B8CVU7</accession>
<name>ATPA_SHEPW</name>
<sequence length="513" mass="55488">MQLNSTEISDLIKQRIEQFEVVSEARNEGTIVAVSDGIIRIHGLADVMQGEMIELPGNRFAIALNLERDSVGAVVMGPYATLAEGDKVKTTGRILEVPVGRGLLGRVVNTLGEPIDGKGPIDSDGFSPVEVIAPGVIERKSVDQPVQTGYKAVDSMIPIGRGQRELIIGDRQIGKTALAIDAIINQKDSGIKCVYVAVGQKASTIANVVRKLEEHGALANTIVVVATASEAAALQYLAPYSGCTMGEYFRDRGEDSLIVYDDLSKQAVAYRQISLLLKRPPGREAYPGDVFYLHSRLLERSSRVNAEYVEKFTKGEVKGQTGSLTALPIIETQAGDVSAFVPTNVISITDGQIFLETDLFNSGLRPAVNPGISVSRVGGAAQTKIIKKLSGGIRTALAQYRELAAFSQFASDLDDATRAQLEHGERVTELMKQKQYAPMSIADQSVSIFAAEKGYLKSVELNKIGDFEASLLSFMNSEHADLMKTINETGNYNADIEGELKASLDKFVETQTW</sequence>
<feature type="chain" id="PRO_1000143436" description="ATP synthase subunit alpha">
    <location>
        <begin position="1"/>
        <end position="513"/>
    </location>
</feature>
<feature type="binding site" evidence="1">
    <location>
        <begin position="169"/>
        <end position="176"/>
    </location>
    <ligand>
        <name>ATP</name>
        <dbReference type="ChEBI" id="CHEBI:30616"/>
    </ligand>
</feature>
<feature type="site" description="Required for activity" evidence="1">
    <location>
        <position position="373"/>
    </location>
</feature>
<organism>
    <name type="scientific">Shewanella piezotolerans (strain WP3 / JCM 13877)</name>
    <dbReference type="NCBI Taxonomy" id="225849"/>
    <lineage>
        <taxon>Bacteria</taxon>
        <taxon>Pseudomonadati</taxon>
        <taxon>Pseudomonadota</taxon>
        <taxon>Gammaproteobacteria</taxon>
        <taxon>Alteromonadales</taxon>
        <taxon>Shewanellaceae</taxon>
        <taxon>Shewanella</taxon>
    </lineage>
</organism>
<reference key="1">
    <citation type="journal article" date="2008" name="PLoS ONE">
        <title>Environmental adaptation: genomic analysis of the piezotolerant and psychrotolerant deep-sea iron reducing bacterium Shewanella piezotolerans WP3.</title>
        <authorList>
            <person name="Wang F."/>
            <person name="Wang J."/>
            <person name="Jian H."/>
            <person name="Zhang B."/>
            <person name="Li S."/>
            <person name="Wang F."/>
            <person name="Zeng X."/>
            <person name="Gao L."/>
            <person name="Bartlett D.H."/>
            <person name="Yu J."/>
            <person name="Hu S."/>
            <person name="Xiao X."/>
        </authorList>
    </citation>
    <scope>NUCLEOTIDE SEQUENCE [LARGE SCALE GENOMIC DNA]</scope>
    <source>
        <strain>WP3 / JCM 13877</strain>
    </source>
</reference>
<comment type="function">
    <text evidence="1">Produces ATP from ADP in the presence of a proton gradient across the membrane. The alpha chain is a regulatory subunit.</text>
</comment>
<comment type="catalytic activity">
    <reaction evidence="1">
        <text>ATP + H2O + 4 H(+)(in) = ADP + phosphate + 5 H(+)(out)</text>
        <dbReference type="Rhea" id="RHEA:57720"/>
        <dbReference type="ChEBI" id="CHEBI:15377"/>
        <dbReference type="ChEBI" id="CHEBI:15378"/>
        <dbReference type="ChEBI" id="CHEBI:30616"/>
        <dbReference type="ChEBI" id="CHEBI:43474"/>
        <dbReference type="ChEBI" id="CHEBI:456216"/>
        <dbReference type="EC" id="7.1.2.2"/>
    </reaction>
</comment>
<comment type="subunit">
    <text evidence="1">F-type ATPases have 2 components, CF(1) - the catalytic core - and CF(0) - the membrane proton channel. CF(1) has five subunits: alpha(3), beta(3), gamma(1), delta(1), epsilon(1). CF(0) has three main subunits: a(1), b(2) and c(9-12). The alpha and beta chains form an alternating ring which encloses part of the gamma chain. CF(1) is attached to CF(0) by a central stalk formed by the gamma and epsilon chains, while a peripheral stalk is formed by the delta and b chains.</text>
</comment>
<comment type="subcellular location">
    <subcellularLocation>
        <location evidence="1">Cell inner membrane</location>
        <topology evidence="1">Peripheral membrane protein</topology>
    </subcellularLocation>
</comment>
<comment type="similarity">
    <text evidence="1">Belongs to the ATPase alpha/beta chains family.</text>
</comment>
<dbReference type="EC" id="7.1.2.2" evidence="1"/>
<dbReference type="EMBL" id="CP000472">
    <property type="protein sequence ID" value="ACJ31773.1"/>
    <property type="molecule type" value="Genomic_DNA"/>
</dbReference>
<dbReference type="RefSeq" id="WP_020915097.1">
    <property type="nucleotide sequence ID" value="NC_011566.1"/>
</dbReference>
<dbReference type="SMR" id="B8CVU7"/>
<dbReference type="STRING" id="225849.swp_5158"/>
<dbReference type="KEGG" id="swp:swp_5158"/>
<dbReference type="eggNOG" id="COG0056">
    <property type="taxonomic scope" value="Bacteria"/>
</dbReference>
<dbReference type="HOGENOM" id="CLU_010091_2_1_6"/>
<dbReference type="OrthoDB" id="9803053at2"/>
<dbReference type="Proteomes" id="UP000000753">
    <property type="component" value="Chromosome"/>
</dbReference>
<dbReference type="GO" id="GO:0005886">
    <property type="term" value="C:plasma membrane"/>
    <property type="evidence" value="ECO:0007669"/>
    <property type="project" value="UniProtKB-SubCell"/>
</dbReference>
<dbReference type="GO" id="GO:0045259">
    <property type="term" value="C:proton-transporting ATP synthase complex"/>
    <property type="evidence" value="ECO:0007669"/>
    <property type="project" value="UniProtKB-KW"/>
</dbReference>
<dbReference type="GO" id="GO:0043531">
    <property type="term" value="F:ADP binding"/>
    <property type="evidence" value="ECO:0007669"/>
    <property type="project" value="TreeGrafter"/>
</dbReference>
<dbReference type="GO" id="GO:0005524">
    <property type="term" value="F:ATP binding"/>
    <property type="evidence" value="ECO:0007669"/>
    <property type="project" value="UniProtKB-UniRule"/>
</dbReference>
<dbReference type="GO" id="GO:0046933">
    <property type="term" value="F:proton-transporting ATP synthase activity, rotational mechanism"/>
    <property type="evidence" value="ECO:0007669"/>
    <property type="project" value="UniProtKB-UniRule"/>
</dbReference>
<dbReference type="CDD" id="cd18113">
    <property type="entry name" value="ATP-synt_F1_alpha_C"/>
    <property type="match status" value="1"/>
</dbReference>
<dbReference type="CDD" id="cd18116">
    <property type="entry name" value="ATP-synt_F1_alpha_N"/>
    <property type="match status" value="1"/>
</dbReference>
<dbReference type="CDD" id="cd01132">
    <property type="entry name" value="F1-ATPase_alpha_CD"/>
    <property type="match status" value="1"/>
</dbReference>
<dbReference type="FunFam" id="1.20.150.20:FF:000001">
    <property type="entry name" value="ATP synthase subunit alpha"/>
    <property type="match status" value="1"/>
</dbReference>
<dbReference type="FunFam" id="2.40.30.20:FF:000001">
    <property type="entry name" value="ATP synthase subunit alpha"/>
    <property type="match status" value="1"/>
</dbReference>
<dbReference type="FunFam" id="3.40.50.300:FF:000002">
    <property type="entry name" value="ATP synthase subunit alpha"/>
    <property type="match status" value="1"/>
</dbReference>
<dbReference type="Gene3D" id="2.40.30.20">
    <property type="match status" value="1"/>
</dbReference>
<dbReference type="Gene3D" id="1.20.150.20">
    <property type="entry name" value="ATP synthase alpha/beta chain, C-terminal domain"/>
    <property type="match status" value="1"/>
</dbReference>
<dbReference type="Gene3D" id="3.40.50.300">
    <property type="entry name" value="P-loop containing nucleotide triphosphate hydrolases"/>
    <property type="match status" value="1"/>
</dbReference>
<dbReference type="HAMAP" id="MF_01346">
    <property type="entry name" value="ATP_synth_alpha_bact"/>
    <property type="match status" value="1"/>
</dbReference>
<dbReference type="InterPro" id="IPR023366">
    <property type="entry name" value="ATP_synth_asu-like_sf"/>
</dbReference>
<dbReference type="InterPro" id="IPR000793">
    <property type="entry name" value="ATP_synth_asu_C"/>
</dbReference>
<dbReference type="InterPro" id="IPR038376">
    <property type="entry name" value="ATP_synth_asu_C_sf"/>
</dbReference>
<dbReference type="InterPro" id="IPR033732">
    <property type="entry name" value="ATP_synth_F1_a_nt-bd_dom"/>
</dbReference>
<dbReference type="InterPro" id="IPR005294">
    <property type="entry name" value="ATP_synth_F1_asu"/>
</dbReference>
<dbReference type="InterPro" id="IPR020003">
    <property type="entry name" value="ATPase_a/bsu_AS"/>
</dbReference>
<dbReference type="InterPro" id="IPR004100">
    <property type="entry name" value="ATPase_F1/V1/A1_a/bsu_N"/>
</dbReference>
<dbReference type="InterPro" id="IPR036121">
    <property type="entry name" value="ATPase_F1/V1/A1_a/bsu_N_sf"/>
</dbReference>
<dbReference type="InterPro" id="IPR000194">
    <property type="entry name" value="ATPase_F1/V1/A1_a/bsu_nucl-bd"/>
</dbReference>
<dbReference type="InterPro" id="IPR027417">
    <property type="entry name" value="P-loop_NTPase"/>
</dbReference>
<dbReference type="NCBIfam" id="TIGR00962">
    <property type="entry name" value="atpA"/>
    <property type="match status" value="1"/>
</dbReference>
<dbReference type="NCBIfam" id="NF009884">
    <property type="entry name" value="PRK13343.1"/>
    <property type="match status" value="1"/>
</dbReference>
<dbReference type="PANTHER" id="PTHR48082">
    <property type="entry name" value="ATP SYNTHASE SUBUNIT ALPHA, MITOCHONDRIAL"/>
    <property type="match status" value="1"/>
</dbReference>
<dbReference type="PANTHER" id="PTHR48082:SF2">
    <property type="entry name" value="ATP SYNTHASE SUBUNIT ALPHA, MITOCHONDRIAL"/>
    <property type="match status" value="1"/>
</dbReference>
<dbReference type="Pfam" id="PF00006">
    <property type="entry name" value="ATP-synt_ab"/>
    <property type="match status" value="1"/>
</dbReference>
<dbReference type="Pfam" id="PF00306">
    <property type="entry name" value="ATP-synt_ab_C"/>
    <property type="match status" value="1"/>
</dbReference>
<dbReference type="Pfam" id="PF02874">
    <property type="entry name" value="ATP-synt_ab_N"/>
    <property type="match status" value="1"/>
</dbReference>
<dbReference type="SUPFAM" id="SSF47917">
    <property type="entry name" value="C-terminal domain of alpha and beta subunits of F1 ATP synthase"/>
    <property type="match status" value="1"/>
</dbReference>
<dbReference type="SUPFAM" id="SSF50615">
    <property type="entry name" value="N-terminal domain of alpha and beta subunits of F1 ATP synthase"/>
    <property type="match status" value="1"/>
</dbReference>
<dbReference type="SUPFAM" id="SSF52540">
    <property type="entry name" value="P-loop containing nucleoside triphosphate hydrolases"/>
    <property type="match status" value="1"/>
</dbReference>
<dbReference type="PROSITE" id="PS00152">
    <property type="entry name" value="ATPASE_ALPHA_BETA"/>
    <property type="match status" value="1"/>
</dbReference>
<proteinExistence type="inferred from homology"/>
<evidence type="ECO:0000255" key="1">
    <source>
        <dbReference type="HAMAP-Rule" id="MF_01346"/>
    </source>
</evidence>